<reference key="1">
    <citation type="journal article" date="2011" name="J. Bacteriol.">
        <title>Complete genome sequence of the Thermophilic Bacterium Exiguobacterium sp. AT1b.</title>
        <authorList>
            <person name="Vishnivetskaya T.A."/>
            <person name="Lucas S."/>
            <person name="Copeland A."/>
            <person name="Lapidus A."/>
            <person name="Glavina del Rio T."/>
            <person name="Dalin E."/>
            <person name="Tice H."/>
            <person name="Bruce D.C."/>
            <person name="Goodwin L.A."/>
            <person name="Pitluck S."/>
            <person name="Saunders E."/>
            <person name="Brettin T."/>
            <person name="Detter C."/>
            <person name="Han C."/>
            <person name="Larimer F."/>
            <person name="Land M.L."/>
            <person name="Hauser L.J."/>
            <person name="Kyrpides N.C."/>
            <person name="Ovchinnikova G."/>
            <person name="Kathariou S."/>
            <person name="Ramaley R.F."/>
            <person name="Rodrigues D.F."/>
            <person name="Hendrix C."/>
            <person name="Richardson P."/>
            <person name="Tiedje J.M."/>
        </authorList>
    </citation>
    <scope>NUCLEOTIDE SEQUENCE [LARGE SCALE GENOMIC DNA]</scope>
    <source>
        <strain>ATCC BAA-1283 / AT1b</strain>
    </source>
</reference>
<dbReference type="EC" id="6.3.5.3" evidence="1"/>
<dbReference type="EC" id="3.5.1.2" evidence="1"/>
<dbReference type="EMBL" id="CP001615">
    <property type="protein sequence ID" value="ACQ71150.1"/>
    <property type="molecule type" value="Genomic_DNA"/>
</dbReference>
<dbReference type="RefSeq" id="WP_015880709.1">
    <property type="nucleotide sequence ID" value="NC_012673.1"/>
</dbReference>
<dbReference type="SMR" id="C4L298"/>
<dbReference type="STRING" id="360911.EAT1b_2228"/>
<dbReference type="KEGG" id="eat:EAT1b_2228"/>
<dbReference type="eggNOG" id="COG0047">
    <property type="taxonomic scope" value="Bacteria"/>
</dbReference>
<dbReference type="HOGENOM" id="CLU_001031_3_1_9"/>
<dbReference type="OrthoDB" id="9804441at2"/>
<dbReference type="UniPathway" id="UPA00074">
    <property type="reaction ID" value="UER00128"/>
</dbReference>
<dbReference type="Proteomes" id="UP000000716">
    <property type="component" value="Chromosome"/>
</dbReference>
<dbReference type="GO" id="GO:0005737">
    <property type="term" value="C:cytoplasm"/>
    <property type="evidence" value="ECO:0007669"/>
    <property type="project" value="UniProtKB-SubCell"/>
</dbReference>
<dbReference type="GO" id="GO:0005524">
    <property type="term" value="F:ATP binding"/>
    <property type="evidence" value="ECO:0007669"/>
    <property type="project" value="UniProtKB-KW"/>
</dbReference>
<dbReference type="GO" id="GO:0004359">
    <property type="term" value="F:glutaminase activity"/>
    <property type="evidence" value="ECO:0007669"/>
    <property type="project" value="UniProtKB-EC"/>
</dbReference>
<dbReference type="GO" id="GO:0004642">
    <property type="term" value="F:phosphoribosylformylglycinamidine synthase activity"/>
    <property type="evidence" value="ECO:0007669"/>
    <property type="project" value="UniProtKB-UniRule"/>
</dbReference>
<dbReference type="GO" id="GO:0006189">
    <property type="term" value="P:'de novo' IMP biosynthetic process"/>
    <property type="evidence" value="ECO:0007669"/>
    <property type="project" value="UniProtKB-UniRule"/>
</dbReference>
<dbReference type="CDD" id="cd01740">
    <property type="entry name" value="GATase1_FGAR_AT"/>
    <property type="match status" value="1"/>
</dbReference>
<dbReference type="FunFam" id="3.40.50.880:FF:000019">
    <property type="entry name" value="Phosphoribosylformylglycinamidine synthase subunit PurQ"/>
    <property type="match status" value="1"/>
</dbReference>
<dbReference type="Gene3D" id="3.40.50.880">
    <property type="match status" value="1"/>
</dbReference>
<dbReference type="HAMAP" id="MF_00421">
    <property type="entry name" value="PurQ"/>
    <property type="match status" value="1"/>
</dbReference>
<dbReference type="InterPro" id="IPR029062">
    <property type="entry name" value="Class_I_gatase-like"/>
</dbReference>
<dbReference type="InterPro" id="IPR010075">
    <property type="entry name" value="PRibForGlyAmidine_synth_PurQ"/>
</dbReference>
<dbReference type="NCBIfam" id="TIGR01737">
    <property type="entry name" value="FGAM_synth_I"/>
    <property type="match status" value="1"/>
</dbReference>
<dbReference type="NCBIfam" id="NF002957">
    <property type="entry name" value="PRK03619.1"/>
    <property type="match status" value="1"/>
</dbReference>
<dbReference type="PANTHER" id="PTHR47552">
    <property type="entry name" value="PHOSPHORIBOSYLFORMYLGLYCINAMIDINE SYNTHASE SUBUNIT PURQ"/>
    <property type="match status" value="1"/>
</dbReference>
<dbReference type="PANTHER" id="PTHR47552:SF1">
    <property type="entry name" value="PHOSPHORIBOSYLFORMYLGLYCINAMIDINE SYNTHASE SUBUNIT PURQ"/>
    <property type="match status" value="1"/>
</dbReference>
<dbReference type="Pfam" id="PF13507">
    <property type="entry name" value="GATase_5"/>
    <property type="match status" value="1"/>
</dbReference>
<dbReference type="PIRSF" id="PIRSF001586">
    <property type="entry name" value="FGAM_synth_I"/>
    <property type="match status" value="1"/>
</dbReference>
<dbReference type="SMART" id="SM01211">
    <property type="entry name" value="GATase_5"/>
    <property type="match status" value="1"/>
</dbReference>
<dbReference type="SUPFAM" id="SSF52317">
    <property type="entry name" value="Class I glutamine amidotransferase-like"/>
    <property type="match status" value="1"/>
</dbReference>
<dbReference type="PROSITE" id="PS51273">
    <property type="entry name" value="GATASE_TYPE_1"/>
    <property type="match status" value="1"/>
</dbReference>
<accession>C4L298</accession>
<feature type="chain" id="PRO_1000206052" description="Phosphoribosylformylglycinamidine synthase subunit PurQ">
    <location>
        <begin position="1"/>
        <end position="226"/>
    </location>
</feature>
<feature type="domain" description="Glutamine amidotransferase type-1" evidence="1">
    <location>
        <begin position="3"/>
        <end position="225"/>
    </location>
</feature>
<feature type="active site" description="Nucleophile" evidence="1">
    <location>
        <position position="86"/>
    </location>
</feature>
<feature type="active site" evidence="1">
    <location>
        <position position="194"/>
    </location>
</feature>
<feature type="active site" evidence="1">
    <location>
        <position position="196"/>
    </location>
</feature>
<evidence type="ECO:0000255" key="1">
    <source>
        <dbReference type="HAMAP-Rule" id="MF_00421"/>
    </source>
</evidence>
<proteinExistence type="inferred from homology"/>
<protein>
    <recommendedName>
        <fullName evidence="1">Phosphoribosylformylglycinamidine synthase subunit PurQ</fullName>
        <shortName evidence="1">FGAM synthase</shortName>
        <ecNumber evidence="1">6.3.5.3</ecNumber>
    </recommendedName>
    <alternativeName>
        <fullName evidence="1">Formylglycinamide ribonucleotide amidotransferase subunit I</fullName>
        <shortName evidence="1">FGAR amidotransferase I</shortName>
        <shortName evidence="1">FGAR-AT I</shortName>
    </alternativeName>
    <alternativeName>
        <fullName evidence="1">Glutaminase PurQ</fullName>
        <ecNumber evidence="1">3.5.1.2</ecNumber>
    </alternativeName>
    <alternativeName>
        <fullName evidence="1">Phosphoribosylformylglycinamidine synthase subunit I</fullName>
    </alternativeName>
</protein>
<comment type="function">
    <text evidence="1">Part of the phosphoribosylformylglycinamidine synthase complex involved in the purines biosynthetic pathway. Catalyzes the ATP-dependent conversion of formylglycinamide ribonucleotide (FGAR) and glutamine to yield formylglycinamidine ribonucleotide (FGAM) and glutamate. The FGAM synthase complex is composed of three subunits. PurQ produces an ammonia molecule by converting glutamine to glutamate. PurL transfers the ammonia molecule to FGAR to form FGAM in an ATP-dependent manner. PurS interacts with PurQ and PurL and is thought to assist in the transfer of the ammonia molecule from PurQ to PurL.</text>
</comment>
<comment type="catalytic activity">
    <reaction evidence="1">
        <text>N(2)-formyl-N(1)-(5-phospho-beta-D-ribosyl)glycinamide + L-glutamine + ATP + H2O = 2-formamido-N(1)-(5-O-phospho-beta-D-ribosyl)acetamidine + L-glutamate + ADP + phosphate + H(+)</text>
        <dbReference type="Rhea" id="RHEA:17129"/>
        <dbReference type="ChEBI" id="CHEBI:15377"/>
        <dbReference type="ChEBI" id="CHEBI:15378"/>
        <dbReference type="ChEBI" id="CHEBI:29985"/>
        <dbReference type="ChEBI" id="CHEBI:30616"/>
        <dbReference type="ChEBI" id="CHEBI:43474"/>
        <dbReference type="ChEBI" id="CHEBI:58359"/>
        <dbReference type="ChEBI" id="CHEBI:147286"/>
        <dbReference type="ChEBI" id="CHEBI:147287"/>
        <dbReference type="ChEBI" id="CHEBI:456216"/>
        <dbReference type="EC" id="6.3.5.3"/>
    </reaction>
</comment>
<comment type="catalytic activity">
    <reaction evidence="1">
        <text>L-glutamine + H2O = L-glutamate + NH4(+)</text>
        <dbReference type="Rhea" id="RHEA:15889"/>
        <dbReference type="ChEBI" id="CHEBI:15377"/>
        <dbReference type="ChEBI" id="CHEBI:28938"/>
        <dbReference type="ChEBI" id="CHEBI:29985"/>
        <dbReference type="ChEBI" id="CHEBI:58359"/>
        <dbReference type="EC" id="3.5.1.2"/>
    </reaction>
</comment>
<comment type="pathway">
    <text evidence="1">Purine metabolism; IMP biosynthesis via de novo pathway; 5-amino-1-(5-phospho-D-ribosyl)imidazole from N(2)-formyl-N(1)-(5-phospho-D-ribosyl)glycinamide: step 1/2.</text>
</comment>
<comment type="subunit">
    <text evidence="1">Part of the FGAM synthase complex composed of 1 PurL, 1 PurQ and 2 PurS subunits.</text>
</comment>
<comment type="subcellular location">
    <subcellularLocation>
        <location evidence="1">Cytoplasm</location>
    </subcellularLocation>
</comment>
<name>PURQ_EXISA</name>
<organism>
    <name type="scientific">Exiguobacterium sp. (strain ATCC BAA-1283 / AT1b)</name>
    <dbReference type="NCBI Taxonomy" id="360911"/>
    <lineage>
        <taxon>Bacteria</taxon>
        <taxon>Bacillati</taxon>
        <taxon>Bacillota</taxon>
        <taxon>Bacilli</taxon>
        <taxon>Bacillales</taxon>
        <taxon>Bacillales Family XII. Incertae Sedis</taxon>
        <taxon>Exiguobacterium</taxon>
    </lineage>
</organism>
<keyword id="KW-0067">ATP-binding</keyword>
<keyword id="KW-0963">Cytoplasm</keyword>
<keyword id="KW-0315">Glutamine amidotransferase</keyword>
<keyword id="KW-0378">Hydrolase</keyword>
<keyword id="KW-0436">Ligase</keyword>
<keyword id="KW-0547">Nucleotide-binding</keyword>
<keyword id="KW-0658">Purine biosynthesis</keyword>
<gene>
    <name evidence="1" type="primary">purQ</name>
    <name type="ordered locus">EAT1b_2228</name>
</gene>
<sequence>MKFAVIVFPGSNCDLDMYHAVKDVLGEEAEYVFHTETSLEGFDGVLLPGGFSYGDYLRCGSIAQFSPIMAEVKRFAEEGRPVLGVCNGFQVLVEAGLLPGVLMRNRDLKFMCKTVDLVVENNETMFTSEYAAQETIRVPIAHGEGNYYCDDATLAALKANGQIAFTYKENPNGSVENIAGITNEAGNVLGMMPHPERAVEALLGGEDGKRLFTSIVKWGARHVTYN</sequence>